<comment type="function">
    <text evidence="1">Catalyzes the thiamine diphosphate-dependent decarboxylation of 2-oxoglutarate and the subsequent addition of the resulting succinic semialdehyde-thiamine pyrophosphate anion to isochorismate to yield 2-succinyl-5-enolpyruvyl-6-hydroxy-3-cyclohexene-1-carboxylate (SEPHCHC).</text>
</comment>
<comment type="catalytic activity">
    <reaction evidence="1">
        <text>isochorismate + 2-oxoglutarate + H(+) = 5-enolpyruvoyl-6-hydroxy-2-succinyl-cyclohex-3-ene-1-carboxylate + CO2</text>
        <dbReference type="Rhea" id="RHEA:25593"/>
        <dbReference type="ChEBI" id="CHEBI:15378"/>
        <dbReference type="ChEBI" id="CHEBI:16526"/>
        <dbReference type="ChEBI" id="CHEBI:16810"/>
        <dbReference type="ChEBI" id="CHEBI:29780"/>
        <dbReference type="ChEBI" id="CHEBI:58818"/>
        <dbReference type="EC" id="2.2.1.9"/>
    </reaction>
</comment>
<comment type="cofactor">
    <cofactor evidence="1">
        <name>Mg(2+)</name>
        <dbReference type="ChEBI" id="CHEBI:18420"/>
    </cofactor>
    <cofactor evidence="1">
        <name>Mn(2+)</name>
        <dbReference type="ChEBI" id="CHEBI:29035"/>
    </cofactor>
</comment>
<comment type="cofactor">
    <cofactor evidence="1">
        <name>thiamine diphosphate</name>
        <dbReference type="ChEBI" id="CHEBI:58937"/>
    </cofactor>
    <text evidence="1">Binds 1 thiamine pyrophosphate per subunit.</text>
</comment>
<comment type="pathway">
    <text evidence="1">Quinol/quinone metabolism; 1,4-dihydroxy-2-naphthoate biosynthesis; 1,4-dihydroxy-2-naphthoate from chorismate: step 2/7.</text>
</comment>
<comment type="pathway">
    <text evidence="1">Quinol/quinone metabolism; menaquinone biosynthesis.</text>
</comment>
<comment type="subunit">
    <text evidence="1">Homodimer.</text>
</comment>
<comment type="similarity">
    <text evidence="1">Belongs to the TPP enzyme family. MenD subfamily.</text>
</comment>
<organism>
    <name type="scientific">Edwardsiella ictaluri (strain 93-146)</name>
    <dbReference type="NCBI Taxonomy" id="634503"/>
    <lineage>
        <taxon>Bacteria</taxon>
        <taxon>Pseudomonadati</taxon>
        <taxon>Pseudomonadota</taxon>
        <taxon>Gammaproteobacteria</taxon>
        <taxon>Enterobacterales</taxon>
        <taxon>Hafniaceae</taxon>
        <taxon>Edwardsiella</taxon>
    </lineage>
</organism>
<reference key="1">
    <citation type="submission" date="2009-03" db="EMBL/GenBank/DDBJ databases">
        <title>Complete genome sequence of Edwardsiella ictaluri 93-146.</title>
        <authorList>
            <person name="Williams M.L."/>
            <person name="Gillaspy A.F."/>
            <person name="Dyer D.W."/>
            <person name="Thune R.L."/>
            <person name="Waldbieser G.C."/>
            <person name="Schuster S.C."/>
            <person name="Gipson J."/>
            <person name="Zaitshik J."/>
            <person name="Landry C."/>
            <person name="Lawrence M.L."/>
        </authorList>
    </citation>
    <scope>NUCLEOTIDE SEQUENCE [LARGE SCALE GENOMIC DNA]</scope>
    <source>
        <strain>93-146</strain>
    </source>
</reference>
<dbReference type="EC" id="2.2.1.9" evidence="1"/>
<dbReference type="EMBL" id="CP001600">
    <property type="protein sequence ID" value="ACR69818.1"/>
    <property type="molecule type" value="Genomic_DNA"/>
</dbReference>
<dbReference type="RefSeq" id="WP_015871926.1">
    <property type="nucleotide sequence ID" value="NZ_CP169062.1"/>
</dbReference>
<dbReference type="SMR" id="C5B7I2"/>
<dbReference type="STRING" id="67780.B6E78_05270"/>
<dbReference type="GeneID" id="69539550"/>
<dbReference type="KEGG" id="eic:NT01EI_2650"/>
<dbReference type="PATRIC" id="fig|634503.3.peg.2365"/>
<dbReference type="HOGENOM" id="CLU_006051_3_0_6"/>
<dbReference type="OrthoDB" id="9791859at2"/>
<dbReference type="UniPathway" id="UPA00079"/>
<dbReference type="UniPathway" id="UPA01057">
    <property type="reaction ID" value="UER00164"/>
</dbReference>
<dbReference type="Proteomes" id="UP000001485">
    <property type="component" value="Chromosome"/>
</dbReference>
<dbReference type="GO" id="GO:0070204">
    <property type="term" value="F:2-succinyl-5-enolpyruvyl-6-hydroxy-3-cyclohexene-1-carboxylic-acid synthase activity"/>
    <property type="evidence" value="ECO:0007669"/>
    <property type="project" value="UniProtKB-UniRule"/>
</dbReference>
<dbReference type="GO" id="GO:0000287">
    <property type="term" value="F:magnesium ion binding"/>
    <property type="evidence" value="ECO:0007669"/>
    <property type="project" value="UniProtKB-UniRule"/>
</dbReference>
<dbReference type="GO" id="GO:0030145">
    <property type="term" value="F:manganese ion binding"/>
    <property type="evidence" value="ECO:0007669"/>
    <property type="project" value="UniProtKB-UniRule"/>
</dbReference>
<dbReference type="GO" id="GO:0030976">
    <property type="term" value="F:thiamine pyrophosphate binding"/>
    <property type="evidence" value="ECO:0007669"/>
    <property type="project" value="UniProtKB-UniRule"/>
</dbReference>
<dbReference type="GO" id="GO:0009234">
    <property type="term" value="P:menaquinone biosynthetic process"/>
    <property type="evidence" value="ECO:0007669"/>
    <property type="project" value="UniProtKB-UniRule"/>
</dbReference>
<dbReference type="CDD" id="cd07037">
    <property type="entry name" value="TPP_PYR_MenD"/>
    <property type="match status" value="1"/>
</dbReference>
<dbReference type="CDD" id="cd02009">
    <property type="entry name" value="TPP_SHCHC_synthase"/>
    <property type="match status" value="1"/>
</dbReference>
<dbReference type="FunFam" id="3.40.50.970:FF:000029">
    <property type="entry name" value="2-succinyl-5-enolpyruvyl-6-hydroxy-3-cyclohexene-1-carboxylate synthase"/>
    <property type="match status" value="1"/>
</dbReference>
<dbReference type="Gene3D" id="3.40.50.970">
    <property type="match status" value="2"/>
</dbReference>
<dbReference type="Gene3D" id="3.40.50.1220">
    <property type="entry name" value="TPP-binding domain"/>
    <property type="match status" value="1"/>
</dbReference>
<dbReference type="HAMAP" id="MF_01659">
    <property type="entry name" value="MenD"/>
    <property type="match status" value="1"/>
</dbReference>
<dbReference type="InterPro" id="IPR029035">
    <property type="entry name" value="DHS-like_NAD/FAD-binding_dom"/>
</dbReference>
<dbReference type="InterPro" id="IPR004433">
    <property type="entry name" value="MenaQ_synth_MenD"/>
</dbReference>
<dbReference type="InterPro" id="IPR032264">
    <property type="entry name" value="MenD_middle"/>
</dbReference>
<dbReference type="InterPro" id="IPR029061">
    <property type="entry name" value="THDP-binding"/>
</dbReference>
<dbReference type="InterPro" id="IPR012001">
    <property type="entry name" value="Thiamin_PyroP_enz_TPP-bd_dom"/>
</dbReference>
<dbReference type="NCBIfam" id="TIGR00173">
    <property type="entry name" value="menD"/>
    <property type="match status" value="1"/>
</dbReference>
<dbReference type="PANTHER" id="PTHR42916">
    <property type="entry name" value="2-SUCCINYL-5-ENOLPYRUVYL-6-HYDROXY-3-CYCLOHEXENE-1-CARBOXYLATE SYNTHASE"/>
    <property type="match status" value="1"/>
</dbReference>
<dbReference type="PANTHER" id="PTHR42916:SF1">
    <property type="entry name" value="PROTEIN PHYLLO, CHLOROPLASTIC"/>
    <property type="match status" value="1"/>
</dbReference>
<dbReference type="Pfam" id="PF16582">
    <property type="entry name" value="TPP_enzyme_M_2"/>
    <property type="match status" value="1"/>
</dbReference>
<dbReference type="Pfam" id="PF02776">
    <property type="entry name" value="TPP_enzyme_N"/>
    <property type="match status" value="1"/>
</dbReference>
<dbReference type="PIRSF" id="PIRSF004983">
    <property type="entry name" value="MenD"/>
    <property type="match status" value="1"/>
</dbReference>
<dbReference type="SUPFAM" id="SSF52467">
    <property type="entry name" value="DHS-like NAD/FAD-binding domain"/>
    <property type="match status" value="1"/>
</dbReference>
<dbReference type="SUPFAM" id="SSF52518">
    <property type="entry name" value="Thiamin diphosphate-binding fold (THDP-binding)"/>
    <property type="match status" value="2"/>
</dbReference>
<feature type="chain" id="PRO_1000215859" description="2-succinyl-5-enolpyruvyl-6-hydroxy-3-cyclohexene-1-carboxylate synthase">
    <location>
        <begin position="1"/>
        <end position="559"/>
    </location>
</feature>
<name>MEND_EDWI9</name>
<protein>
    <recommendedName>
        <fullName evidence="1">2-succinyl-5-enolpyruvyl-6-hydroxy-3-cyclohexene-1-carboxylate synthase</fullName>
        <shortName evidence="1">SEPHCHC synthase</shortName>
        <ecNumber evidence="1">2.2.1.9</ecNumber>
    </recommendedName>
    <alternativeName>
        <fullName evidence="1">Menaquinone biosynthesis protein MenD</fullName>
    </alternativeName>
</protein>
<sequence length="559" mass="60184">MSSILFNRRWASVLLEALTRHGVHHVCIAPGSRSTPLTMAAASHPRLHSHTHFDERGLGHLALGLAKVSGQPVAVIVTSGTAVANLYPALIEAGLTGERLILLTADRPPELIDCGANQAIRQQNMFASHPTETLSLPRPTPDISAAWLVSSIDSAMARLDHGALHINCPFADPLYGEDDDGQQGWSAALGCWWQGETPWLQESSPYTGALRAEVDWAQWRRRRGVVLIGRVDAEAGRQAAAWGEELGWPVLGDVLSQSGQPLPCADLWLPHAEARRLLAQAEIVVQFGASLTGKRLLQWQAACKPQRYWLIDPLPGRLDPACHRGRRLVAPVQAWLQAHPAQPAAPWAPQLKVLAGRAAQCVEQTLQASFGEAQVAHRLAQLLPLRGQLFVGNSLIVRLVDALGQLPAGYPVYSNRGASGIDGLVSTIAGVQRGSGLPTLAILGDLSALYDINGLALLRQVTAPTVVIVVNNNGGQIFSMLPTPPAERERFYLMPQNVDFRHAAALFDLDYACPVDWAALTDAVSQGWRRCGTTLIELRVPGTAGAEALQQLLGKVAAL</sequence>
<evidence type="ECO:0000255" key="1">
    <source>
        <dbReference type="HAMAP-Rule" id="MF_01659"/>
    </source>
</evidence>
<keyword id="KW-0460">Magnesium</keyword>
<keyword id="KW-0464">Manganese</keyword>
<keyword id="KW-0474">Menaquinone biosynthesis</keyword>
<keyword id="KW-0479">Metal-binding</keyword>
<keyword id="KW-0786">Thiamine pyrophosphate</keyword>
<keyword id="KW-0808">Transferase</keyword>
<accession>C5B7I2</accession>
<proteinExistence type="inferred from homology"/>
<gene>
    <name evidence="1" type="primary">menD</name>
    <name type="ordered locus">NT01EI_2650</name>
</gene>